<protein>
    <recommendedName>
        <fullName evidence="1">Chaperone protein DnaK</fullName>
    </recommendedName>
    <alternativeName>
        <fullName evidence="1">HSP70</fullName>
    </alternativeName>
    <alternativeName>
        <fullName evidence="1">Heat shock 70 kDa protein</fullName>
    </alternativeName>
    <alternativeName>
        <fullName evidence="1">Heat shock protein 70</fullName>
    </alternativeName>
</protein>
<gene>
    <name evidence="1" type="primary">dnaK</name>
    <name type="ordered locus">Helmi_23620</name>
    <name type="ORF">HM1_2437</name>
</gene>
<accession>B0TAD7</accession>
<feature type="chain" id="PRO_1000119711" description="Chaperone protein DnaK">
    <location>
        <begin position="1"/>
        <end position="616"/>
    </location>
</feature>
<feature type="region of interest" description="Disordered" evidence="2">
    <location>
        <begin position="576"/>
        <end position="616"/>
    </location>
</feature>
<feature type="compositionally biased region" description="Gly residues" evidence="2">
    <location>
        <begin position="583"/>
        <end position="593"/>
    </location>
</feature>
<feature type="modified residue" description="Phosphothreonine; by autocatalysis" evidence="1">
    <location>
        <position position="174"/>
    </location>
</feature>
<comment type="function">
    <text evidence="1">Acts as a chaperone.</text>
</comment>
<comment type="induction">
    <text evidence="1">By stress conditions e.g. heat shock.</text>
</comment>
<comment type="similarity">
    <text evidence="1">Belongs to the heat shock protein 70 family.</text>
</comment>
<organism>
    <name type="scientific">Heliobacterium modesticaldum (strain ATCC 51547 / Ice1)</name>
    <dbReference type="NCBI Taxonomy" id="498761"/>
    <lineage>
        <taxon>Bacteria</taxon>
        <taxon>Bacillati</taxon>
        <taxon>Bacillota</taxon>
        <taxon>Clostridia</taxon>
        <taxon>Eubacteriales</taxon>
        <taxon>Heliobacteriaceae</taxon>
        <taxon>Heliomicrobium</taxon>
    </lineage>
</organism>
<name>DNAK_HELMI</name>
<keyword id="KW-0067">ATP-binding</keyword>
<keyword id="KW-0143">Chaperone</keyword>
<keyword id="KW-0547">Nucleotide-binding</keyword>
<keyword id="KW-0597">Phosphoprotein</keyword>
<keyword id="KW-1185">Reference proteome</keyword>
<keyword id="KW-0346">Stress response</keyword>
<evidence type="ECO:0000255" key="1">
    <source>
        <dbReference type="HAMAP-Rule" id="MF_00332"/>
    </source>
</evidence>
<evidence type="ECO:0000256" key="2">
    <source>
        <dbReference type="SAM" id="MobiDB-lite"/>
    </source>
</evidence>
<proteinExistence type="inferred from homology"/>
<sequence length="616" mass="66248">MGKIIGIDLGTTNSCVAVLEGGESVVIPNKEGARTTPSVVGFSKTGERLVGQVAKRQAITNPDRTVISIKRHMGTDYKVKIDDKNYTPQEISAMILQKLKADAEAYLGEPVTQAVITVPAYFTDSQRQATKDAGAIAGLEVMRIINEPTAAALAYGIDKGEDQTILVYDLGGGTFDVSILELGDGLFEVKATSGNNRLGGDDFDEKIINWMIAEFKKETGVDLRGDKMAMQRLKEAAEKAKIELSGVMSTNINLPFITATADGPQHLDMTLTRAKFDELTADLVEMTMGPTRQALQDAKLEPKDIDKVILVGGSSRIPAVQEAIRKYLGKEPFKGINPDEVVAMGAAIQAGVLGGEVKGIVLADVTPLSLGIETLGGICTVLIPRNTTIPTSKSETFTTAADNQTSVEVHVLQGERKLASQNKTLGRFHLSGIAPAPRGIPQIEVKFDIDANGIVHVSAKDKATGNEQKITITASTGLSKEEIERMIKDAELHAEEDRKRQEEVEIRNQADSMVYQAEKTLKDLGDKAEAADKAKIESAKEELKKALEGTDMEEIKKKTEALTTVVYELSTKLYQQASAPGAGPEGASGGFGGENKKDDNVVDADYTVIDDDKKKT</sequence>
<dbReference type="EMBL" id="CP000930">
    <property type="protein sequence ID" value="ABZ84987.1"/>
    <property type="molecule type" value="Genomic_DNA"/>
</dbReference>
<dbReference type="RefSeq" id="WP_012283484.1">
    <property type="nucleotide sequence ID" value="NC_010337.2"/>
</dbReference>
<dbReference type="SMR" id="B0TAD7"/>
<dbReference type="STRING" id="498761.HM1_2437"/>
<dbReference type="KEGG" id="hmo:HM1_2437"/>
<dbReference type="eggNOG" id="COG0443">
    <property type="taxonomic scope" value="Bacteria"/>
</dbReference>
<dbReference type="HOGENOM" id="CLU_005965_2_4_9"/>
<dbReference type="OrthoDB" id="9766019at2"/>
<dbReference type="Proteomes" id="UP000008550">
    <property type="component" value="Chromosome"/>
</dbReference>
<dbReference type="GO" id="GO:0005524">
    <property type="term" value="F:ATP binding"/>
    <property type="evidence" value="ECO:0007669"/>
    <property type="project" value="UniProtKB-UniRule"/>
</dbReference>
<dbReference type="GO" id="GO:0140662">
    <property type="term" value="F:ATP-dependent protein folding chaperone"/>
    <property type="evidence" value="ECO:0007669"/>
    <property type="project" value="InterPro"/>
</dbReference>
<dbReference type="GO" id="GO:0051082">
    <property type="term" value="F:unfolded protein binding"/>
    <property type="evidence" value="ECO:0007669"/>
    <property type="project" value="InterPro"/>
</dbReference>
<dbReference type="CDD" id="cd10234">
    <property type="entry name" value="ASKHA_NBD_HSP70_DnaK-like"/>
    <property type="match status" value="1"/>
</dbReference>
<dbReference type="FunFam" id="2.60.34.10:FF:000014">
    <property type="entry name" value="Chaperone protein DnaK HSP70"/>
    <property type="match status" value="1"/>
</dbReference>
<dbReference type="FunFam" id="1.20.1270.10:FF:000001">
    <property type="entry name" value="Molecular chaperone DnaK"/>
    <property type="match status" value="1"/>
</dbReference>
<dbReference type="FunFam" id="3.30.420.40:FF:000071">
    <property type="entry name" value="Molecular chaperone DnaK"/>
    <property type="match status" value="1"/>
</dbReference>
<dbReference type="FunFam" id="3.90.640.10:FF:000003">
    <property type="entry name" value="Molecular chaperone DnaK"/>
    <property type="match status" value="1"/>
</dbReference>
<dbReference type="Gene3D" id="1.20.1270.10">
    <property type="match status" value="1"/>
</dbReference>
<dbReference type="Gene3D" id="3.30.420.40">
    <property type="match status" value="2"/>
</dbReference>
<dbReference type="Gene3D" id="3.90.640.10">
    <property type="entry name" value="Actin, Chain A, domain 4"/>
    <property type="match status" value="1"/>
</dbReference>
<dbReference type="Gene3D" id="2.60.34.10">
    <property type="entry name" value="Substrate Binding Domain Of DNAk, Chain A, domain 1"/>
    <property type="match status" value="1"/>
</dbReference>
<dbReference type="HAMAP" id="MF_00332">
    <property type="entry name" value="DnaK"/>
    <property type="match status" value="1"/>
</dbReference>
<dbReference type="InterPro" id="IPR043129">
    <property type="entry name" value="ATPase_NBD"/>
</dbReference>
<dbReference type="InterPro" id="IPR012725">
    <property type="entry name" value="Chaperone_DnaK"/>
</dbReference>
<dbReference type="InterPro" id="IPR018181">
    <property type="entry name" value="Heat_shock_70_CS"/>
</dbReference>
<dbReference type="InterPro" id="IPR029048">
    <property type="entry name" value="HSP70_C_sf"/>
</dbReference>
<dbReference type="InterPro" id="IPR029047">
    <property type="entry name" value="HSP70_peptide-bd_sf"/>
</dbReference>
<dbReference type="InterPro" id="IPR013126">
    <property type="entry name" value="Hsp_70_fam"/>
</dbReference>
<dbReference type="NCBIfam" id="NF001413">
    <property type="entry name" value="PRK00290.1"/>
    <property type="match status" value="1"/>
</dbReference>
<dbReference type="NCBIfam" id="TIGR02350">
    <property type="entry name" value="prok_dnaK"/>
    <property type="match status" value="1"/>
</dbReference>
<dbReference type="PANTHER" id="PTHR19375">
    <property type="entry name" value="HEAT SHOCK PROTEIN 70KDA"/>
    <property type="match status" value="1"/>
</dbReference>
<dbReference type="Pfam" id="PF00012">
    <property type="entry name" value="HSP70"/>
    <property type="match status" value="1"/>
</dbReference>
<dbReference type="PRINTS" id="PR00301">
    <property type="entry name" value="HEATSHOCK70"/>
</dbReference>
<dbReference type="SUPFAM" id="SSF53067">
    <property type="entry name" value="Actin-like ATPase domain"/>
    <property type="match status" value="2"/>
</dbReference>
<dbReference type="SUPFAM" id="SSF100934">
    <property type="entry name" value="Heat shock protein 70kD (HSP70), C-terminal subdomain"/>
    <property type="match status" value="1"/>
</dbReference>
<dbReference type="SUPFAM" id="SSF100920">
    <property type="entry name" value="Heat shock protein 70kD (HSP70), peptide-binding domain"/>
    <property type="match status" value="1"/>
</dbReference>
<dbReference type="PROSITE" id="PS00297">
    <property type="entry name" value="HSP70_1"/>
    <property type="match status" value="1"/>
</dbReference>
<dbReference type="PROSITE" id="PS00329">
    <property type="entry name" value="HSP70_2"/>
    <property type="match status" value="1"/>
</dbReference>
<dbReference type="PROSITE" id="PS01036">
    <property type="entry name" value="HSP70_3"/>
    <property type="match status" value="1"/>
</dbReference>
<reference key="1">
    <citation type="journal article" date="2008" name="J. Bacteriol.">
        <title>The genome of Heliobacterium modesticaldum, a phototrophic representative of the Firmicutes containing the simplest photosynthetic apparatus.</title>
        <authorList>
            <person name="Sattley W.M."/>
            <person name="Madigan M.T."/>
            <person name="Swingley W.D."/>
            <person name="Cheung P.C."/>
            <person name="Clocksin K.M."/>
            <person name="Conrad A.L."/>
            <person name="Dejesa L.C."/>
            <person name="Honchak B.M."/>
            <person name="Jung D.O."/>
            <person name="Karbach L.E."/>
            <person name="Kurdoglu A."/>
            <person name="Lahiri S."/>
            <person name="Mastrian S.D."/>
            <person name="Page L.E."/>
            <person name="Taylor H.L."/>
            <person name="Wang Z.T."/>
            <person name="Raymond J."/>
            <person name="Chen M."/>
            <person name="Blankenship R.E."/>
            <person name="Touchman J.W."/>
        </authorList>
    </citation>
    <scope>NUCLEOTIDE SEQUENCE [LARGE SCALE GENOMIC DNA]</scope>
    <source>
        <strain>ATCC 51547 / Ice1</strain>
    </source>
</reference>